<reference key="1">
    <citation type="journal article" date="2006" name="Proc. Natl. Acad. Sci. U.S.A.">
        <title>Comparative genomics of the lactic acid bacteria.</title>
        <authorList>
            <person name="Makarova K.S."/>
            <person name="Slesarev A."/>
            <person name="Wolf Y.I."/>
            <person name="Sorokin A."/>
            <person name="Mirkin B."/>
            <person name="Koonin E.V."/>
            <person name="Pavlov A."/>
            <person name="Pavlova N."/>
            <person name="Karamychev V."/>
            <person name="Polouchine N."/>
            <person name="Shakhova V."/>
            <person name="Grigoriev I."/>
            <person name="Lou Y."/>
            <person name="Rohksar D."/>
            <person name="Lucas S."/>
            <person name="Huang K."/>
            <person name="Goodstein D.M."/>
            <person name="Hawkins T."/>
            <person name="Plengvidhya V."/>
            <person name="Welker D."/>
            <person name="Hughes J."/>
            <person name="Goh Y."/>
            <person name="Benson A."/>
            <person name="Baldwin K."/>
            <person name="Lee J.-H."/>
            <person name="Diaz-Muniz I."/>
            <person name="Dosti B."/>
            <person name="Smeianov V."/>
            <person name="Wechter W."/>
            <person name="Barabote R."/>
            <person name="Lorca G."/>
            <person name="Altermann E."/>
            <person name="Barrangou R."/>
            <person name="Ganesan B."/>
            <person name="Xie Y."/>
            <person name="Rawsthorne H."/>
            <person name="Tamir D."/>
            <person name="Parker C."/>
            <person name="Breidt F."/>
            <person name="Broadbent J.R."/>
            <person name="Hutkins R."/>
            <person name="O'Sullivan D."/>
            <person name="Steele J."/>
            <person name="Unlu G."/>
            <person name="Saier M.H. Jr."/>
            <person name="Klaenhammer T."/>
            <person name="Richardson P."/>
            <person name="Kozyavkin S."/>
            <person name="Weimer B.C."/>
            <person name="Mills D.A."/>
        </authorList>
    </citation>
    <scope>NUCLEOTIDE SEQUENCE [LARGE SCALE GENOMIC DNA]</scope>
    <source>
        <strain>ATCC 8293 / DSM 20343 / BCRC 11652 / CCM 1803 / JCM 6124 / NCDO 523 / NBRC 100496 / NCIMB 8023 / NCTC 12954 / NRRL B-1118 / 37Y</strain>
    </source>
</reference>
<protein>
    <recommendedName>
        <fullName evidence="1">Ribosomal RNA large subunit methyltransferase H</fullName>
        <ecNumber evidence="1">2.1.1.177</ecNumber>
    </recommendedName>
    <alternativeName>
        <fullName evidence="1">23S rRNA (pseudouridine1915-N3)-methyltransferase</fullName>
    </alternativeName>
    <alternativeName>
        <fullName evidence="1">23S rRNA m3Psi1915 methyltransferase</fullName>
    </alternativeName>
    <alternativeName>
        <fullName evidence="1">rRNA (pseudouridine-N3-)-methyltransferase RlmH</fullName>
    </alternativeName>
</protein>
<organism>
    <name type="scientific">Leuconostoc mesenteroides subsp. mesenteroides (strain ATCC 8293 / DSM 20343 / BCRC 11652 / CCM 1803 / JCM 6124 / NCDO 523 / NBRC 100496 / NCIMB 8023 / NCTC 12954 / NRRL B-1118 / 37Y)</name>
    <dbReference type="NCBI Taxonomy" id="203120"/>
    <lineage>
        <taxon>Bacteria</taxon>
        <taxon>Bacillati</taxon>
        <taxon>Bacillota</taxon>
        <taxon>Bacilli</taxon>
        <taxon>Lactobacillales</taxon>
        <taxon>Lactobacillaceae</taxon>
        <taxon>Leuconostoc</taxon>
    </lineage>
</organism>
<accession>Q03UV6</accession>
<comment type="function">
    <text evidence="1">Specifically methylates the pseudouridine at position 1915 (m3Psi1915) in 23S rRNA.</text>
</comment>
<comment type="catalytic activity">
    <reaction evidence="1">
        <text>pseudouridine(1915) in 23S rRNA + S-adenosyl-L-methionine = N(3)-methylpseudouridine(1915) in 23S rRNA + S-adenosyl-L-homocysteine + H(+)</text>
        <dbReference type="Rhea" id="RHEA:42752"/>
        <dbReference type="Rhea" id="RHEA-COMP:10221"/>
        <dbReference type="Rhea" id="RHEA-COMP:10222"/>
        <dbReference type="ChEBI" id="CHEBI:15378"/>
        <dbReference type="ChEBI" id="CHEBI:57856"/>
        <dbReference type="ChEBI" id="CHEBI:59789"/>
        <dbReference type="ChEBI" id="CHEBI:65314"/>
        <dbReference type="ChEBI" id="CHEBI:74486"/>
        <dbReference type="EC" id="2.1.1.177"/>
    </reaction>
</comment>
<comment type="subunit">
    <text evidence="1">Homodimer.</text>
</comment>
<comment type="subcellular location">
    <subcellularLocation>
        <location evidence="1">Cytoplasm</location>
    </subcellularLocation>
</comment>
<comment type="similarity">
    <text evidence="1">Belongs to the RNA methyltransferase RlmH family.</text>
</comment>
<name>RLMH_LEUMM</name>
<keyword id="KW-0963">Cytoplasm</keyword>
<keyword id="KW-0489">Methyltransferase</keyword>
<keyword id="KW-1185">Reference proteome</keyword>
<keyword id="KW-0698">rRNA processing</keyword>
<keyword id="KW-0949">S-adenosyl-L-methionine</keyword>
<keyword id="KW-0808">Transferase</keyword>
<sequence>MNIKLITVGKLKEKYLTEGIAEYTKRLSRFCKVQVVELIDEKTPENASEAQNNQIMAREGERIQAKIGSRDYVIVLAIEGKQFPSEEFSQKLEAIAVNGYSDITFIIGGSLGLSKAIKQRANLKMSFGLLTLPHQLMRLVLIEQIYRAFMIQQGSPYHK</sequence>
<proteinExistence type="inferred from homology"/>
<gene>
    <name evidence="1" type="primary">rlmH</name>
    <name type="ordered locus">LEUM_1945</name>
</gene>
<evidence type="ECO:0000255" key="1">
    <source>
        <dbReference type="HAMAP-Rule" id="MF_00658"/>
    </source>
</evidence>
<dbReference type="EC" id="2.1.1.177" evidence="1"/>
<dbReference type="EMBL" id="CP000414">
    <property type="protein sequence ID" value="ABJ63016.1"/>
    <property type="molecule type" value="Genomic_DNA"/>
</dbReference>
<dbReference type="RefSeq" id="WP_011680487.1">
    <property type="nucleotide sequence ID" value="NC_008531.1"/>
</dbReference>
<dbReference type="SMR" id="Q03UV6"/>
<dbReference type="EnsemblBacteria" id="ABJ63016">
    <property type="protein sequence ID" value="ABJ63016"/>
    <property type="gene ID" value="LEUM_1945"/>
</dbReference>
<dbReference type="GeneID" id="29577119"/>
<dbReference type="KEGG" id="lme:LEUM_1945"/>
<dbReference type="eggNOG" id="COG1576">
    <property type="taxonomic scope" value="Bacteria"/>
</dbReference>
<dbReference type="HOGENOM" id="CLU_100552_0_0_9"/>
<dbReference type="Proteomes" id="UP000000362">
    <property type="component" value="Chromosome"/>
</dbReference>
<dbReference type="GO" id="GO:0005737">
    <property type="term" value="C:cytoplasm"/>
    <property type="evidence" value="ECO:0007669"/>
    <property type="project" value="UniProtKB-SubCell"/>
</dbReference>
<dbReference type="GO" id="GO:0070038">
    <property type="term" value="F:rRNA (pseudouridine-N3-)-methyltransferase activity"/>
    <property type="evidence" value="ECO:0007669"/>
    <property type="project" value="UniProtKB-UniRule"/>
</dbReference>
<dbReference type="CDD" id="cd18081">
    <property type="entry name" value="RlmH-like"/>
    <property type="match status" value="1"/>
</dbReference>
<dbReference type="Gene3D" id="3.40.1280.10">
    <property type="match status" value="1"/>
</dbReference>
<dbReference type="HAMAP" id="MF_00658">
    <property type="entry name" value="23SrRNA_methyltr_H"/>
    <property type="match status" value="1"/>
</dbReference>
<dbReference type="InterPro" id="IPR029028">
    <property type="entry name" value="Alpha/beta_knot_MTases"/>
</dbReference>
<dbReference type="InterPro" id="IPR003742">
    <property type="entry name" value="RlmH-like"/>
</dbReference>
<dbReference type="InterPro" id="IPR029026">
    <property type="entry name" value="tRNA_m1G_MTases_N"/>
</dbReference>
<dbReference type="NCBIfam" id="NF000985">
    <property type="entry name" value="PRK00103.1-3"/>
    <property type="match status" value="1"/>
</dbReference>
<dbReference type="NCBIfam" id="TIGR00246">
    <property type="entry name" value="tRNA_RlmH_YbeA"/>
    <property type="match status" value="1"/>
</dbReference>
<dbReference type="PANTHER" id="PTHR33603">
    <property type="entry name" value="METHYLTRANSFERASE"/>
    <property type="match status" value="1"/>
</dbReference>
<dbReference type="PANTHER" id="PTHR33603:SF1">
    <property type="entry name" value="RIBOSOMAL RNA LARGE SUBUNIT METHYLTRANSFERASE H"/>
    <property type="match status" value="1"/>
</dbReference>
<dbReference type="Pfam" id="PF02590">
    <property type="entry name" value="SPOUT_MTase"/>
    <property type="match status" value="1"/>
</dbReference>
<dbReference type="PIRSF" id="PIRSF004505">
    <property type="entry name" value="MT_bac"/>
    <property type="match status" value="1"/>
</dbReference>
<dbReference type="SUPFAM" id="SSF75217">
    <property type="entry name" value="alpha/beta knot"/>
    <property type="match status" value="1"/>
</dbReference>
<feature type="chain" id="PRO_1000061801" description="Ribosomal RNA large subunit methyltransferase H">
    <location>
        <begin position="1"/>
        <end position="159"/>
    </location>
</feature>
<feature type="binding site" evidence="1">
    <location>
        <position position="76"/>
    </location>
    <ligand>
        <name>S-adenosyl-L-methionine</name>
        <dbReference type="ChEBI" id="CHEBI:59789"/>
    </ligand>
</feature>
<feature type="binding site" evidence="1">
    <location>
        <position position="108"/>
    </location>
    <ligand>
        <name>S-adenosyl-L-methionine</name>
        <dbReference type="ChEBI" id="CHEBI:59789"/>
    </ligand>
</feature>
<feature type="binding site" evidence="1">
    <location>
        <begin position="127"/>
        <end position="132"/>
    </location>
    <ligand>
        <name>S-adenosyl-L-methionine</name>
        <dbReference type="ChEBI" id="CHEBI:59789"/>
    </ligand>
</feature>